<feature type="chain" id="PRO_0000317687" description="Allantoinase">
    <location>
        <begin position="1"/>
        <end position="445"/>
    </location>
</feature>
<feature type="binding site" evidence="1">
    <location>
        <position position="63"/>
    </location>
    <ligand>
        <name>Zn(2+)</name>
        <dbReference type="ChEBI" id="CHEBI:29105"/>
        <label>1</label>
    </ligand>
</feature>
<feature type="binding site" evidence="1">
    <location>
        <position position="65"/>
    </location>
    <ligand>
        <name>Zn(2+)</name>
        <dbReference type="ChEBI" id="CHEBI:29105"/>
        <label>1</label>
    </ligand>
</feature>
<feature type="binding site" description="via carbamate group" evidence="1">
    <location>
        <position position="150"/>
    </location>
    <ligand>
        <name>Zn(2+)</name>
        <dbReference type="ChEBI" id="CHEBI:29105"/>
        <label>1</label>
    </ligand>
</feature>
<feature type="binding site" description="via carbamate group" evidence="1">
    <location>
        <position position="150"/>
    </location>
    <ligand>
        <name>Zn(2+)</name>
        <dbReference type="ChEBI" id="CHEBI:29105"/>
        <label>2</label>
    </ligand>
</feature>
<feature type="binding site" evidence="1">
    <location>
        <position position="186"/>
    </location>
    <ligand>
        <name>Zn(2+)</name>
        <dbReference type="ChEBI" id="CHEBI:29105"/>
        <label>2</label>
    </ligand>
</feature>
<feature type="binding site" evidence="1">
    <location>
        <position position="238"/>
    </location>
    <ligand>
        <name>Zn(2+)</name>
        <dbReference type="ChEBI" id="CHEBI:29105"/>
        <label>2</label>
    </ligand>
</feature>
<feature type="binding site" evidence="1">
    <location>
        <position position="311"/>
    </location>
    <ligand>
        <name>Zn(2+)</name>
        <dbReference type="ChEBI" id="CHEBI:29105"/>
        <label>1</label>
    </ligand>
</feature>
<feature type="modified residue" description="N6-carboxylysine" evidence="1">
    <location>
        <position position="150"/>
    </location>
</feature>
<name>ALLB_STRAW</name>
<evidence type="ECO:0000255" key="1">
    <source>
        <dbReference type="HAMAP-Rule" id="MF_01645"/>
    </source>
</evidence>
<dbReference type="EC" id="3.5.2.5" evidence="1"/>
<dbReference type="EMBL" id="BA000030">
    <property type="protein sequence ID" value="BAC69707.1"/>
    <property type="molecule type" value="Genomic_DNA"/>
</dbReference>
<dbReference type="RefSeq" id="WP_010983436.1">
    <property type="nucleotide sequence ID" value="NZ_JZJK01000086.1"/>
</dbReference>
<dbReference type="SMR" id="Q82LL4"/>
<dbReference type="GeneID" id="41539097"/>
<dbReference type="KEGG" id="sma:SAVERM_1996"/>
<dbReference type="eggNOG" id="COG0044">
    <property type="taxonomic scope" value="Bacteria"/>
</dbReference>
<dbReference type="HOGENOM" id="CLU_015572_4_0_11"/>
<dbReference type="OrthoDB" id="9803027at2"/>
<dbReference type="UniPathway" id="UPA00395">
    <property type="reaction ID" value="UER00653"/>
</dbReference>
<dbReference type="Proteomes" id="UP000000428">
    <property type="component" value="Chromosome"/>
</dbReference>
<dbReference type="GO" id="GO:0005737">
    <property type="term" value="C:cytoplasm"/>
    <property type="evidence" value="ECO:0007669"/>
    <property type="project" value="TreeGrafter"/>
</dbReference>
<dbReference type="GO" id="GO:0004038">
    <property type="term" value="F:allantoinase activity"/>
    <property type="evidence" value="ECO:0007669"/>
    <property type="project" value="UniProtKB-UniRule"/>
</dbReference>
<dbReference type="GO" id="GO:0050897">
    <property type="term" value="F:cobalt ion binding"/>
    <property type="evidence" value="ECO:0007669"/>
    <property type="project" value="InterPro"/>
</dbReference>
<dbReference type="GO" id="GO:0008270">
    <property type="term" value="F:zinc ion binding"/>
    <property type="evidence" value="ECO:0007669"/>
    <property type="project" value="InterPro"/>
</dbReference>
<dbReference type="GO" id="GO:0000256">
    <property type="term" value="P:allantoin catabolic process"/>
    <property type="evidence" value="ECO:0007669"/>
    <property type="project" value="UniProtKB-UniRule"/>
</dbReference>
<dbReference type="GO" id="GO:0006145">
    <property type="term" value="P:purine nucleobase catabolic process"/>
    <property type="evidence" value="ECO:0007669"/>
    <property type="project" value="TreeGrafter"/>
</dbReference>
<dbReference type="FunFam" id="3.20.20.140:FF:000032">
    <property type="entry name" value="Allantoinase Dal1"/>
    <property type="match status" value="1"/>
</dbReference>
<dbReference type="Gene3D" id="3.20.20.140">
    <property type="entry name" value="Metal-dependent hydrolases"/>
    <property type="match status" value="1"/>
</dbReference>
<dbReference type="HAMAP" id="MF_01645">
    <property type="entry name" value="Hydantoinase"/>
    <property type="match status" value="1"/>
</dbReference>
<dbReference type="InterPro" id="IPR017593">
    <property type="entry name" value="Allantoinase"/>
</dbReference>
<dbReference type="InterPro" id="IPR047604">
    <property type="entry name" value="Allantoinase_bact"/>
</dbReference>
<dbReference type="InterPro" id="IPR006680">
    <property type="entry name" value="Amidohydro-rel"/>
</dbReference>
<dbReference type="InterPro" id="IPR050138">
    <property type="entry name" value="DHOase/Allantoinase_Hydrolase"/>
</dbReference>
<dbReference type="InterPro" id="IPR011059">
    <property type="entry name" value="Metal-dep_hydrolase_composite"/>
</dbReference>
<dbReference type="InterPro" id="IPR032466">
    <property type="entry name" value="Metal_Hydrolase"/>
</dbReference>
<dbReference type="NCBIfam" id="TIGR03178">
    <property type="entry name" value="allantoinase"/>
    <property type="match status" value="1"/>
</dbReference>
<dbReference type="PANTHER" id="PTHR43668">
    <property type="entry name" value="ALLANTOINASE"/>
    <property type="match status" value="1"/>
</dbReference>
<dbReference type="PANTHER" id="PTHR43668:SF2">
    <property type="entry name" value="ALLANTOINASE"/>
    <property type="match status" value="1"/>
</dbReference>
<dbReference type="Pfam" id="PF01979">
    <property type="entry name" value="Amidohydro_1"/>
    <property type="match status" value="1"/>
</dbReference>
<dbReference type="SUPFAM" id="SSF51338">
    <property type="entry name" value="Composite domain of metallo-dependent hydrolases"/>
    <property type="match status" value="1"/>
</dbReference>
<dbReference type="SUPFAM" id="SSF51556">
    <property type="entry name" value="Metallo-dependent hydrolases"/>
    <property type="match status" value="1"/>
</dbReference>
<accession>Q82LL4</accession>
<proteinExistence type="inferred from homology"/>
<gene>
    <name evidence="1" type="primary">allB</name>
    <name evidence="1" type="synonym">pucH</name>
    <name type="synonym">sav1996</name>
    <name type="ordered locus">SAV_1996</name>
</gene>
<reference key="1">
    <citation type="journal article" date="2001" name="Proc. Natl. Acad. Sci. U.S.A.">
        <title>Genome sequence of an industrial microorganism Streptomyces avermitilis: deducing the ability of producing secondary metabolites.</title>
        <authorList>
            <person name="Omura S."/>
            <person name="Ikeda H."/>
            <person name="Ishikawa J."/>
            <person name="Hanamoto A."/>
            <person name="Takahashi C."/>
            <person name="Shinose M."/>
            <person name="Takahashi Y."/>
            <person name="Horikawa H."/>
            <person name="Nakazawa H."/>
            <person name="Osonoe T."/>
            <person name="Kikuchi H."/>
            <person name="Shiba T."/>
            <person name="Sakaki Y."/>
            <person name="Hattori M."/>
        </authorList>
    </citation>
    <scope>NUCLEOTIDE SEQUENCE [LARGE SCALE GENOMIC DNA]</scope>
    <source>
        <strain>ATCC 31267 / DSM 46492 / JCM 5070 / NBRC 14893 / NCIMB 12804 / NRRL 8165 / MA-4680</strain>
    </source>
</reference>
<reference key="2">
    <citation type="journal article" date="2003" name="Nat. Biotechnol.">
        <title>Complete genome sequence and comparative analysis of the industrial microorganism Streptomyces avermitilis.</title>
        <authorList>
            <person name="Ikeda H."/>
            <person name="Ishikawa J."/>
            <person name="Hanamoto A."/>
            <person name="Shinose M."/>
            <person name="Kikuchi H."/>
            <person name="Shiba T."/>
            <person name="Sakaki Y."/>
            <person name="Hattori M."/>
            <person name="Omura S."/>
        </authorList>
    </citation>
    <scope>NUCLEOTIDE SEQUENCE [LARGE SCALE GENOMIC DNA]</scope>
    <source>
        <strain>ATCC 31267 / DSM 46492 / JCM 5070 / NBRC 14893 / NCIMB 12804 / NRRL 8165 / MA-4680</strain>
    </source>
</reference>
<comment type="function">
    <text evidence="1">Catalyzes the conversion of allantoin (5-ureidohydantoin) to allantoic acid by hydrolytic cleavage of the five-member hydantoin ring.</text>
</comment>
<comment type="catalytic activity">
    <reaction evidence="1">
        <text>(S)-allantoin + H2O = allantoate + H(+)</text>
        <dbReference type="Rhea" id="RHEA:17029"/>
        <dbReference type="ChEBI" id="CHEBI:15377"/>
        <dbReference type="ChEBI" id="CHEBI:15378"/>
        <dbReference type="ChEBI" id="CHEBI:15678"/>
        <dbReference type="ChEBI" id="CHEBI:17536"/>
        <dbReference type="EC" id="3.5.2.5"/>
    </reaction>
</comment>
<comment type="cofactor">
    <cofactor evidence="1">
        <name>Zn(2+)</name>
        <dbReference type="ChEBI" id="CHEBI:29105"/>
    </cofactor>
    <text evidence="1">Binds 2 Zn(2+) ions per subunit.</text>
</comment>
<comment type="pathway">
    <text evidence="1">Nitrogen metabolism; (S)-allantoin degradation; allantoate from (S)-allantoin: step 1/1.</text>
</comment>
<comment type="subunit">
    <text evidence="1">Homotetramer.</text>
</comment>
<comment type="PTM">
    <text evidence="1">Carboxylation allows a single lysine to coordinate two zinc ions.</text>
</comment>
<comment type="similarity">
    <text evidence="1">Belongs to the metallo-dependent hydrolases superfamily. Allantoinase family.</text>
</comment>
<sequence>MSDVELVLRSTRVITPEGTRPAAVAVAAGKITAVLPHDAEVPAGARLEDLGDDVLLPGLVDTHVHVNDPGRTHWEGFWTATRAAAAGGITTLVDMPLNSLPPTTTVGNLRTKRDVAADKAHIDVGFWGGALPDNVKDLRPLHDAGVFGFKAFLSPSGVDEFPELDQERLARSMAEIAGFGGLLIVHAEDPHHLAAAPQRGGPRYTDFLASRPRDAEDTAIANLLAQAKRLNARVHVLHLSSSDALPLIAGAKAEGVRVTVETCPHYLTLTAEEVPDGASEFKCCPPIREAANQDLLWQALADGTIDCVVTDHSPSTADLKTDDFATAWGGISGLQLSLPAIWTEARRRGHSLEDVVRWMSARTARLVGLAQKGAIEAGRDADFAVLAPDETFTVDPAALQHRNRVTAYAGKTLSGVVKSTWLRGERIMADGEFTEPKGRLLSREP</sequence>
<protein>
    <recommendedName>
        <fullName evidence="1">Allantoinase</fullName>
        <ecNumber evidence="1">3.5.2.5</ecNumber>
    </recommendedName>
    <alternativeName>
        <fullName evidence="1">Allantoin-utilizing enzyme</fullName>
    </alternativeName>
</protein>
<keyword id="KW-0378">Hydrolase</keyword>
<keyword id="KW-0479">Metal-binding</keyword>
<keyword id="KW-0659">Purine metabolism</keyword>
<keyword id="KW-1185">Reference proteome</keyword>
<keyword id="KW-0862">Zinc</keyword>
<organism>
    <name type="scientific">Streptomyces avermitilis (strain ATCC 31267 / DSM 46492 / JCM 5070 / NBRC 14893 / NCIMB 12804 / NRRL 8165 / MA-4680)</name>
    <dbReference type="NCBI Taxonomy" id="227882"/>
    <lineage>
        <taxon>Bacteria</taxon>
        <taxon>Bacillati</taxon>
        <taxon>Actinomycetota</taxon>
        <taxon>Actinomycetes</taxon>
        <taxon>Kitasatosporales</taxon>
        <taxon>Streptomycetaceae</taxon>
        <taxon>Streptomyces</taxon>
    </lineage>
</organism>